<proteinExistence type="inferred from homology"/>
<protein>
    <recommendedName>
        <fullName>Putative lipase atg15</fullName>
        <ecNumber>3.1.1.3</ecNumber>
    </recommendedName>
    <alternativeName>
        <fullName>Autophagy-related protein 15</fullName>
    </alternativeName>
</protein>
<keyword id="KW-0072">Autophagy</keyword>
<keyword id="KW-0967">Endosome</keyword>
<keyword id="KW-0325">Glycoprotein</keyword>
<keyword id="KW-0378">Hydrolase</keyword>
<keyword id="KW-0442">Lipid degradation</keyword>
<keyword id="KW-0443">Lipid metabolism</keyword>
<keyword id="KW-0472">Membrane</keyword>
<keyword id="KW-1185">Reference proteome</keyword>
<keyword id="KW-0735">Signal-anchor</keyword>
<keyword id="KW-0812">Transmembrane</keyword>
<keyword id="KW-1133">Transmembrane helix</keyword>
<gene>
    <name type="primary">atg15</name>
    <name type="ORF">An03g02820</name>
</gene>
<comment type="function">
    <text evidence="1">Lipase which is essential for lysis of subvacuolar cytoplasm to vacuole targeted bodies and intravacuolar autophagic bodies. Involved in the lysis of intravacuolar multivesicular body (MVB) vesicles. The intravacuolar membrane disintegration by atg15 is critical to life span extension (By similarity).</text>
</comment>
<comment type="catalytic activity">
    <reaction>
        <text>a triacylglycerol + H2O = a diacylglycerol + a fatty acid + H(+)</text>
        <dbReference type="Rhea" id="RHEA:12044"/>
        <dbReference type="ChEBI" id="CHEBI:15377"/>
        <dbReference type="ChEBI" id="CHEBI:15378"/>
        <dbReference type="ChEBI" id="CHEBI:17855"/>
        <dbReference type="ChEBI" id="CHEBI:18035"/>
        <dbReference type="ChEBI" id="CHEBI:28868"/>
        <dbReference type="EC" id="3.1.1.3"/>
    </reaction>
</comment>
<comment type="subunit">
    <text evidence="1">Binds to both phosphatidylinositol (PI) and phosphatidylinositol 3,5-bisphosphate (PIP2).</text>
</comment>
<comment type="subcellular location">
    <subcellularLocation>
        <location evidence="2">Endosome</location>
        <location evidence="2">Multivesicular body membrane</location>
        <topology evidence="2">Single-pass type II membrane protein</topology>
    </subcellularLocation>
    <subcellularLocation>
        <location evidence="2">Prevacuolar compartment membrane</location>
        <topology evidence="2">Single-pass type II membrane protein</topology>
    </subcellularLocation>
    <text evidence="2">From ER, targeted to vacuolar lumen at the MVB vesicles via the Golgi and the prevacuolar compartment (PVC).</text>
</comment>
<comment type="similarity">
    <text evidence="5">Belongs to the AB hydrolase superfamily. Lipase family.</text>
</comment>
<evidence type="ECO:0000250" key="1"/>
<evidence type="ECO:0000250" key="2">
    <source>
        <dbReference type="UniProtKB" id="P25641"/>
    </source>
</evidence>
<evidence type="ECO:0000255" key="3"/>
<evidence type="ECO:0000255" key="4">
    <source>
        <dbReference type="PROSITE-ProRule" id="PRU10037"/>
    </source>
</evidence>
<evidence type="ECO:0000305" key="5"/>
<feature type="chain" id="PRO_5000219762" description="Putative lipase atg15">
    <location>
        <begin position="1"/>
        <end position="595"/>
    </location>
</feature>
<feature type="topological domain" description="Cytoplasmic" evidence="1">
    <location>
        <begin position="1"/>
        <end position="20"/>
    </location>
</feature>
<feature type="transmembrane region" description="Helical; Signal-anchor for type II membrane protein">
    <location>
        <begin position="21"/>
        <end position="41"/>
    </location>
</feature>
<feature type="topological domain" description="Lumenal" evidence="1">
    <location>
        <begin position="42"/>
        <end position="595"/>
    </location>
</feature>
<feature type="active site" description="Charge relay system" evidence="4">
    <location>
        <position position="319"/>
    </location>
</feature>
<feature type="glycosylation site" description="N-linked (GlcNAc...) asparagine" evidence="3">
    <location>
        <position position="164"/>
    </location>
</feature>
<feature type="glycosylation site" description="N-linked (GlcNAc...) asparagine" evidence="3">
    <location>
        <position position="199"/>
    </location>
</feature>
<feature type="glycosylation site" description="N-linked (GlcNAc...) asparagine" evidence="3">
    <location>
        <position position="221"/>
    </location>
</feature>
<feature type="glycosylation site" description="N-linked (GlcNAc...) asparagine" evidence="3">
    <location>
        <position position="279"/>
    </location>
</feature>
<feature type="glycosylation site" description="N-linked (GlcNAc...) asparagine" evidence="3">
    <location>
        <position position="303"/>
    </location>
</feature>
<feature type="glycosylation site" description="N-linked (GlcNAc...) asparagine" evidence="3">
    <location>
        <position position="465"/>
    </location>
</feature>
<name>ATG15_ASPNC</name>
<accession>A2QGD9</accession>
<dbReference type="EC" id="3.1.1.3"/>
<dbReference type="EMBL" id="AM270049">
    <property type="protein sequence ID" value="CAK44586.1"/>
    <property type="molecule type" value="Genomic_DNA"/>
</dbReference>
<dbReference type="RefSeq" id="XP_001390178.1">
    <property type="nucleotide sequence ID" value="XM_001390141.1"/>
</dbReference>
<dbReference type="ESTHER" id="aspnc-atg15">
    <property type="family name" value="ATG15-related-lipase"/>
</dbReference>
<dbReference type="GlyCosmos" id="A2QGD9">
    <property type="glycosylation" value="6 sites, No reported glycans"/>
</dbReference>
<dbReference type="EnsemblFungi" id="CAK44586">
    <property type="protein sequence ID" value="CAK44586"/>
    <property type="gene ID" value="An03g02820"/>
</dbReference>
<dbReference type="GeneID" id="4980272"/>
<dbReference type="KEGG" id="ang:An03g02820"/>
<dbReference type="VEuPathDB" id="FungiDB:An03g02820"/>
<dbReference type="HOGENOM" id="CLU_028295_0_1_1"/>
<dbReference type="Proteomes" id="UP000006706">
    <property type="component" value="Chromosome 6R"/>
</dbReference>
<dbReference type="GO" id="GO:0005783">
    <property type="term" value="C:endoplasmic reticulum"/>
    <property type="evidence" value="ECO:0007669"/>
    <property type="project" value="EnsemblFungi"/>
</dbReference>
<dbReference type="GO" id="GO:0032585">
    <property type="term" value="C:multivesicular body membrane"/>
    <property type="evidence" value="ECO:0007669"/>
    <property type="project" value="UniProtKB-SubCell"/>
</dbReference>
<dbReference type="GO" id="GO:0005775">
    <property type="term" value="C:vacuolar lumen"/>
    <property type="evidence" value="ECO:0007669"/>
    <property type="project" value="EnsemblFungi"/>
</dbReference>
<dbReference type="GO" id="GO:0005774">
    <property type="term" value="C:vacuolar membrane"/>
    <property type="evidence" value="ECO:0007669"/>
    <property type="project" value="EnsemblFungi"/>
</dbReference>
<dbReference type="GO" id="GO:0004620">
    <property type="term" value="F:phospholipase activity"/>
    <property type="evidence" value="ECO:0007669"/>
    <property type="project" value="EnsemblFungi"/>
</dbReference>
<dbReference type="GO" id="GO:0004806">
    <property type="term" value="F:triacylglycerol lipase activity"/>
    <property type="evidence" value="ECO:0007669"/>
    <property type="project" value="UniProtKB-EC"/>
</dbReference>
<dbReference type="GO" id="GO:0034496">
    <property type="term" value="P:multivesicular body membrane disassembly"/>
    <property type="evidence" value="ECO:0007669"/>
    <property type="project" value="EnsemblFungi"/>
</dbReference>
<dbReference type="GO" id="GO:0046461">
    <property type="term" value="P:neutral lipid catabolic process"/>
    <property type="evidence" value="ECO:0007669"/>
    <property type="project" value="EnsemblFungi"/>
</dbReference>
<dbReference type="GO" id="GO:0000425">
    <property type="term" value="P:pexophagy"/>
    <property type="evidence" value="ECO:0007669"/>
    <property type="project" value="EnsemblFungi"/>
</dbReference>
<dbReference type="GO" id="GO:0006660">
    <property type="term" value="P:phosphatidylserine catabolic process"/>
    <property type="evidence" value="ECO:0007669"/>
    <property type="project" value="EnsemblFungi"/>
</dbReference>
<dbReference type="GO" id="GO:0034727">
    <property type="term" value="P:piecemeal microautophagy of the nucleus"/>
    <property type="evidence" value="ECO:0007669"/>
    <property type="project" value="EnsemblFungi"/>
</dbReference>
<dbReference type="GO" id="GO:0006624">
    <property type="term" value="P:vacuolar protein processing"/>
    <property type="evidence" value="ECO:0007669"/>
    <property type="project" value="EnsemblFungi"/>
</dbReference>
<dbReference type="CDD" id="cd00519">
    <property type="entry name" value="Lipase_3"/>
    <property type="match status" value="1"/>
</dbReference>
<dbReference type="FunFam" id="3.40.50.1820:FF:000129">
    <property type="entry name" value="Autophagy related lipase Atg15, putative"/>
    <property type="match status" value="1"/>
</dbReference>
<dbReference type="Gene3D" id="3.40.50.1820">
    <property type="entry name" value="alpha/beta hydrolase"/>
    <property type="match status" value="1"/>
</dbReference>
<dbReference type="InterPro" id="IPR029058">
    <property type="entry name" value="AB_hydrolase_fold"/>
</dbReference>
<dbReference type="InterPro" id="IPR050805">
    <property type="entry name" value="ATG15_Lipase"/>
</dbReference>
<dbReference type="InterPro" id="IPR002921">
    <property type="entry name" value="Fungal_lipase-type"/>
</dbReference>
<dbReference type="PANTHER" id="PTHR47175">
    <property type="entry name" value="LIPASE ATG15-RELATED"/>
    <property type="match status" value="1"/>
</dbReference>
<dbReference type="PANTHER" id="PTHR47175:SF2">
    <property type="entry name" value="LIPASE ATG15-RELATED"/>
    <property type="match status" value="1"/>
</dbReference>
<dbReference type="Pfam" id="PF01764">
    <property type="entry name" value="Lipase_3"/>
    <property type="match status" value="1"/>
</dbReference>
<dbReference type="SUPFAM" id="SSF53474">
    <property type="entry name" value="alpha/beta-Hydrolases"/>
    <property type="match status" value="1"/>
</dbReference>
<dbReference type="PROSITE" id="PS00120">
    <property type="entry name" value="LIPASE_SER"/>
    <property type="match status" value="1"/>
</dbReference>
<organism>
    <name type="scientific">Aspergillus niger (strain ATCC MYA-4892 / CBS 513.88 / FGSC A1513)</name>
    <dbReference type="NCBI Taxonomy" id="425011"/>
    <lineage>
        <taxon>Eukaryota</taxon>
        <taxon>Fungi</taxon>
        <taxon>Dikarya</taxon>
        <taxon>Ascomycota</taxon>
        <taxon>Pezizomycotina</taxon>
        <taxon>Eurotiomycetes</taxon>
        <taxon>Eurotiomycetidae</taxon>
        <taxon>Eurotiales</taxon>
        <taxon>Aspergillaceae</taxon>
        <taxon>Aspergillus</taxon>
        <taxon>Aspergillus subgen. Circumdati</taxon>
    </lineage>
</organism>
<sequence>MKGLRGHNKKSFWGNTRLSDLLWPVTLLPGLISAYQPVYLGSRQSSPFLPPQIPLGDSPPLSDTHEFTLRHIFHRGTYQDPDLHRRLDITPDTRLRAVSDAGIESDVVTPNTPLVASSQPLIIERLADRRLSVIEEHLVTARSSGSAVALSPSDWVMDTLPGPNVTEKKTVVALAMMTANDYIEVPGTGDWQDIHGRFNHSGSFGWQGDGLRGHVYADKTNSTVVISLKGTSPALFDGEGTTTNDKINDNLFFSCCCGQGGSYLWRQVCDCQTTLYNANLTCIVEAMLDENRYYRASLDLYSNITEMYPNANVWLTGHSLGGAVSSLLGLTFGVPVVTFEAVPEALPAARLGLPSPPGHDSRYPQSRRNTGSYHFGHTADPVYMGTCNGVSSVCTWGGYAMESACHTGQMCVYDTVEDKGWRVGLSKHRINYVIANVLAGYDDVPPCAPEEECYDCELWKFFRSNGSEITTTTSATSTSTSTTTSRTSTCKTPGWWGCLDQTTTTETTSTSTSTSTCKTPGWFGCKDPTTTSDITSVPTITTTEPPMTSTTTCKTPGWFGCKDETTTQVIAPAATLTITEPPVTSTTTGKHLGRF</sequence>
<reference key="1">
    <citation type="journal article" date="2007" name="Nat. Biotechnol.">
        <title>Genome sequencing and analysis of the versatile cell factory Aspergillus niger CBS 513.88.</title>
        <authorList>
            <person name="Pel H.J."/>
            <person name="de Winde J.H."/>
            <person name="Archer D.B."/>
            <person name="Dyer P.S."/>
            <person name="Hofmann G."/>
            <person name="Schaap P.J."/>
            <person name="Turner G."/>
            <person name="de Vries R.P."/>
            <person name="Albang R."/>
            <person name="Albermann K."/>
            <person name="Andersen M.R."/>
            <person name="Bendtsen J.D."/>
            <person name="Benen J.A.E."/>
            <person name="van den Berg M."/>
            <person name="Breestraat S."/>
            <person name="Caddick M.X."/>
            <person name="Contreras R."/>
            <person name="Cornell M."/>
            <person name="Coutinho P.M."/>
            <person name="Danchin E.G.J."/>
            <person name="Debets A.J.M."/>
            <person name="Dekker P."/>
            <person name="van Dijck P.W.M."/>
            <person name="van Dijk A."/>
            <person name="Dijkhuizen L."/>
            <person name="Driessen A.J.M."/>
            <person name="d'Enfert C."/>
            <person name="Geysens S."/>
            <person name="Goosen C."/>
            <person name="Groot G.S.P."/>
            <person name="de Groot P.W.J."/>
            <person name="Guillemette T."/>
            <person name="Henrissat B."/>
            <person name="Herweijer M."/>
            <person name="van den Hombergh J.P.T.W."/>
            <person name="van den Hondel C.A.M.J.J."/>
            <person name="van der Heijden R.T.J.M."/>
            <person name="van der Kaaij R.M."/>
            <person name="Klis F.M."/>
            <person name="Kools H.J."/>
            <person name="Kubicek C.P."/>
            <person name="van Kuyk P.A."/>
            <person name="Lauber J."/>
            <person name="Lu X."/>
            <person name="van der Maarel M.J.E.C."/>
            <person name="Meulenberg R."/>
            <person name="Menke H."/>
            <person name="Mortimer M.A."/>
            <person name="Nielsen J."/>
            <person name="Oliver S.G."/>
            <person name="Olsthoorn M."/>
            <person name="Pal K."/>
            <person name="van Peij N.N.M.E."/>
            <person name="Ram A.F.J."/>
            <person name="Rinas U."/>
            <person name="Roubos J.A."/>
            <person name="Sagt C.M.J."/>
            <person name="Schmoll M."/>
            <person name="Sun J."/>
            <person name="Ussery D."/>
            <person name="Varga J."/>
            <person name="Vervecken W."/>
            <person name="van de Vondervoort P.J.J."/>
            <person name="Wedler H."/>
            <person name="Woesten H.A.B."/>
            <person name="Zeng A.-P."/>
            <person name="van Ooyen A.J.J."/>
            <person name="Visser J."/>
            <person name="Stam H."/>
        </authorList>
    </citation>
    <scope>NUCLEOTIDE SEQUENCE [LARGE SCALE GENOMIC DNA]</scope>
    <source>
        <strain>ATCC MYA-4892 / CBS 513.88 / FGSC A1513</strain>
    </source>
</reference>